<protein>
    <recommendedName>
        <fullName evidence="1">Serine hydroxymethyltransferase</fullName>
        <shortName evidence="1">SHMT</shortName>
        <shortName evidence="1">Serine methylase</shortName>
        <ecNumber evidence="1">2.1.2.1</ecNumber>
    </recommendedName>
</protein>
<comment type="function">
    <text evidence="1">Catalyzes the reversible interconversion of serine and glycine with tetrahydrofolate (THF) serving as the one-carbon carrier. This reaction serves as the major source of one-carbon groups required for the biosynthesis of purines, thymidylate, methionine, and other important biomolecules. Also exhibits THF-independent aldolase activity toward beta-hydroxyamino acids, producing glycine and aldehydes, via a retro-aldol mechanism.</text>
</comment>
<comment type="catalytic activity">
    <reaction evidence="1">
        <text>(6R)-5,10-methylene-5,6,7,8-tetrahydrofolate + glycine + H2O = (6S)-5,6,7,8-tetrahydrofolate + L-serine</text>
        <dbReference type="Rhea" id="RHEA:15481"/>
        <dbReference type="ChEBI" id="CHEBI:15377"/>
        <dbReference type="ChEBI" id="CHEBI:15636"/>
        <dbReference type="ChEBI" id="CHEBI:33384"/>
        <dbReference type="ChEBI" id="CHEBI:57305"/>
        <dbReference type="ChEBI" id="CHEBI:57453"/>
        <dbReference type="EC" id="2.1.2.1"/>
    </reaction>
</comment>
<comment type="cofactor">
    <cofactor evidence="1">
        <name>pyridoxal 5'-phosphate</name>
        <dbReference type="ChEBI" id="CHEBI:597326"/>
    </cofactor>
</comment>
<comment type="pathway">
    <text evidence="1">One-carbon metabolism; tetrahydrofolate interconversion.</text>
</comment>
<comment type="pathway">
    <text evidence="1">Amino-acid biosynthesis; glycine biosynthesis; glycine from L-serine: step 1/1.</text>
</comment>
<comment type="subunit">
    <text evidence="1">Homodimer.</text>
</comment>
<comment type="subcellular location">
    <subcellularLocation>
        <location evidence="1">Cytoplasm</location>
    </subcellularLocation>
</comment>
<comment type="similarity">
    <text evidence="1">Belongs to the SHMT family.</text>
</comment>
<gene>
    <name evidence="1" type="primary">glyA</name>
    <name type="ordered locus">KRH_18000</name>
</gene>
<organism>
    <name type="scientific">Kocuria rhizophila (strain ATCC 9341 / DSM 348 / NBRC 103217 / DC2201)</name>
    <dbReference type="NCBI Taxonomy" id="378753"/>
    <lineage>
        <taxon>Bacteria</taxon>
        <taxon>Bacillati</taxon>
        <taxon>Actinomycetota</taxon>
        <taxon>Actinomycetes</taxon>
        <taxon>Micrococcales</taxon>
        <taxon>Micrococcaceae</taxon>
        <taxon>Kocuria</taxon>
    </lineage>
</organism>
<accession>B2GM31</accession>
<name>GLYA_KOCRD</name>
<proteinExistence type="inferred from homology"/>
<evidence type="ECO:0000255" key="1">
    <source>
        <dbReference type="HAMAP-Rule" id="MF_00051"/>
    </source>
</evidence>
<keyword id="KW-0028">Amino-acid biosynthesis</keyword>
<keyword id="KW-0963">Cytoplasm</keyword>
<keyword id="KW-0554">One-carbon metabolism</keyword>
<keyword id="KW-0663">Pyridoxal phosphate</keyword>
<keyword id="KW-1185">Reference proteome</keyword>
<keyword id="KW-0808">Transferase</keyword>
<feature type="chain" id="PRO_0000369932" description="Serine hydroxymethyltransferase">
    <location>
        <begin position="1"/>
        <end position="424"/>
    </location>
</feature>
<feature type="binding site" evidence="1">
    <location>
        <position position="123"/>
    </location>
    <ligand>
        <name>(6S)-5,6,7,8-tetrahydrofolate</name>
        <dbReference type="ChEBI" id="CHEBI:57453"/>
    </ligand>
</feature>
<feature type="binding site" evidence="1">
    <location>
        <begin position="127"/>
        <end position="129"/>
    </location>
    <ligand>
        <name>(6S)-5,6,7,8-tetrahydrofolate</name>
        <dbReference type="ChEBI" id="CHEBI:57453"/>
    </ligand>
</feature>
<feature type="binding site" evidence="1">
    <location>
        <position position="245"/>
    </location>
    <ligand>
        <name>(6S)-5,6,7,8-tetrahydrofolate</name>
        <dbReference type="ChEBI" id="CHEBI:57453"/>
    </ligand>
</feature>
<feature type="site" description="Plays an important role in substrate specificity" evidence="1">
    <location>
        <position position="231"/>
    </location>
</feature>
<feature type="modified residue" description="N6-(pyridoxal phosphate)lysine" evidence="1">
    <location>
        <position position="232"/>
    </location>
</feature>
<dbReference type="EC" id="2.1.2.1" evidence="1"/>
<dbReference type="EMBL" id="AP009152">
    <property type="protein sequence ID" value="BAG30147.1"/>
    <property type="molecule type" value="Genomic_DNA"/>
</dbReference>
<dbReference type="RefSeq" id="WP_012398868.1">
    <property type="nucleotide sequence ID" value="NC_010617.1"/>
</dbReference>
<dbReference type="SMR" id="B2GM31"/>
<dbReference type="STRING" id="378753.KRH_18000"/>
<dbReference type="KEGG" id="krh:KRH_18000"/>
<dbReference type="eggNOG" id="COG0112">
    <property type="taxonomic scope" value="Bacteria"/>
</dbReference>
<dbReference type="HOGENOM" id="CLU_022477_2_1_11"/>
<dbReference type="OrthoDB" id="9803846at2"/>
<dbReference type="UniPathway" id="UPA00193"/>
<dbReference type="UniPathway" id="UPA00288">
    <property type="reaction ID" value="UER01023"/>
</dbReference>
<dbReference type="Proteomes" id="UP000008838">
    <property type="component" value="Chromosome"/>
</dbReference>
<dbReference type="GO" id="GO:0005829">
    <property type="term" value="C:cytosol"/>
    <property type="evidence" value="ECO:0007669"/>
    <property type="project" value="TreeGrafter"/>
</dbReference>
<dbReference type="GO" id="GO:0004372">
    <property type="term" value="F:glycine hydroxymethyltransferase activity"/>
    <property type="evidence" value="ECO:0007669"/>
    <property type="project" value="UniProtKB-UniRule"/>
</dbReference>
<dbReference type="GO" id="GO:0030170">
    <property type="term" value="F:pyridoxal phosphate binding"/>
    <property type="evidence" value="ECO:0007669"/>
    <property type="project" value="UniProtKB-UniRule"/>
</dbReference>
<dbReference type="GO" id="GO:0019264">
    <property type="term" value="P:glycine biosynthetic process from serine"/>
    <property type="evidence" value="ECO:0007669"/>
    <property type="project" value="UniProtKB-UniRule"/>
</dbReference>
<dbReference type="GO" id="GO:0035999">
    <property type="term" value="P:tetrahydrofolate interconversion"/>
    <property type="evidence" value="ECO:0007669"/>
    <property type="project" value="UniProtKB-UniRule"/>
</dbReference>
<dbReference type="CDD" id="cd00378">
    <property type="entry name" value="SHMT"/>
    <property type="match status" value="1"/>
</dbReference>
<dbReference type="FunFam" id="3.40.640.10:FF:000001">
    <property type="entry name" value="Serine hydroxymethyltransferase"/>
    <property type="match status" value="1"/>
</dbReference>
<dbReference type="Gene3D" id="3.90.1150.10">
    <property type="entry name" value="Aspartate Aminotransferase, domain 1"/>
    <property type="match status" value="1"/>
</dbReference>
<dbReference type="Gene3D" id="3.40.640.10">
    <property type="entry name" value="Type I PLP-dependent aspartate aminotransferase-like (Major domain)"/>
    <property type="match status" value="1"/>
</dbReference>
<dbReference type="HAMAP" id="MF_00051">
    <property type="entry name" value="SHMT"/>
    <property type="match status" value="1"/>
</dbReference>
<dbReference type="InterPro" id="IPR015424">
    <property type="entry name" value="PyrdxlP-dep_Trfase"/>
</dbReference>
<dbReference type="InterPro" id="IPR015421">
    <property type="entry name" value="PyrdxlP-dep_Trfase_major"/>
</dbReference>
<dbReference type="InterPro" id="IPR015422">
    <property type="entry name" value="PyrdxlP-dep_Trfase_small"/>
</dbReference>
<dbReference type="InterPro" id="IPR001085">
    <property type="entry name" value="Ser_HO-MeTrfase"/>
</dbReference>
<dbReference type="InterPro" id="IPR049943">
    <property type="entry name" value="Ser_HO-MeTrfase-like"/>
</dbReference>
<dbReference type="InterPro" id="IPR019798">
    <property type="entry name" value="Ser_HO-MeTrfase_PLP_BS"/>
</dbReference>
<dbReference type="InterPro" id="IPR039429">
    <property type="entry name" value="SHMT-like_dom"/>
</dbReference>
<dbReference type="NCBIfam" id="NF000586">
    <property type="entry name" value="PRK00011.1"/>
    <property type="match status" value="1"/>
</dbReference>
<dbReference type="PANTHER" id="PTHR11680">
    <property type="entry name" value="SERINE HYDROXYMETHYLTRANSFERASE"/>
    <property type="match status" value="1"/>
</dbReference>
<dbReference type="PANTHER" id="PTHR11680:SF35">
    <property type="entry name" value="SERINE HYDROXYMETHYLTRANSFERASE 1"/>
    <property type="match status" value="1"/>
</dbReference>
<dbReference type="Pfam" id="PF00464">
    <property type="entry name" value="SHMT"/>
    <property type="match status" value="1"/>
</dbReference>
<dbReference type="PIRSF" id="PIRSF000412">
    <property type="entry name" value="SHMT"/>
    <property type="match status" value="1"/>
</dbReference>
<dbReference type="SUPFAM" id="SSF53383">
    <property type="entry name" value="PLP-dependent transferases"/>
    <property type="match status" value="1"/>
</dbReference>
<dbReference type="PROSITE" id="PS00096">
    <property type="entry name" value="SHMT"/>
    <property type="match status" value="1"/>
</dbReference>
<reference key="1">
    <citation type="journal article" date="2008" name="J. Bacteriol.">
        <title>Complete genome sequence of the soil actinomycete Kocuria rhizophila.</title>
        <authorList>
            <person name="Takarada H."/>
            <person name="Sekine M."/>
            <person name="Kosugi H."/>
            <person name="Matsuo Y."/>
            <person name="Fujisawa T."/>
            <person name="Omata S."/>
            <person name="Kishi E."/>
            <person name="Shimizu A."/>
            <person name="Tsukatani N."/>
            <person name="Tanikawa S."/>
            <person name="Fujita N."/>
            <person name="Harayama S."/>
        </authorList>
    </citation>
    <scope>NUCLEOTIDE SEQUENCE [LARGE SCALE GENOMIC DNA]</scope>
    <source>
        <strain>ATCC 9341 / DSM 348 / NBRC 103217 / DC2201</strain>
    </source>
</reference>
<sequence length="424" mass="45637">MTESVTNQPLSDVDPDVAQAIQDELGRQRSTLEMIASENFAPRAVLEAQGSVLTNKYAEGYPGRRYYGGCEYVDVVENLARDRACELFGADHANVQPHSGAQANTAVMAALMQPGDTLMGLSLAHGGHLTHGMKINVSGKLYNIAAYEVEPETYRIDMDRVREQALEARPNVIVAGWSAYSRQLDFEAFRSIADEVGAKLWVDMAHFAGLVAAGLHPNPVPHAHVTTSTVHKTLAGPRSGVILCEADLKKKIDSAVFPGQQGGPLMHAIAGKAVAFKIAASEGFAERQRRTIEGAQILAERLTAPDLAEHGVSVLTGGTDVHLVLVDLRDSELDGKQAEDLLHRAGITVNRNAVPWDPRPPMVTSGLRIGTPALATRGFGAEQFTEVADVIAQALMPGADVDALRSRVDALTEQFPLYPGLEEW</sequence>